<proteinExistence type="evidence at protein level"/>
<feature type="signal peptide" evidence="1">
    <location>
        <begin position="1"/>
        <end position="28"/>
    </location>
</feature>
<feature type="chain" id="PRO_0000405388" description="Protease inhibitor Egf1.0">
    <location>
        <begin position="29"/>
        <end position="233"/>
    </location>
</feature>
<feature type="domain" description="TIL">
    <location>
        <begin position="52"/>
        <end position="104"/>
    </location>
</feature>
<feature type="region of interest" description="Disordered" evidence="2">
    <location>
        <begin position="201"/>
        <end position="233"/>
    </location>
</feature>
<feature type="mutagenesis site" description="Loss of inhibitory activity." evidence="3">
    <original>R</original>
    <variation>A</variation>
    <location>
        <position position="79"/>
    </location>
</feature>
<gene>
    <name type="primary">O12</name>
</gene>
<organismHost>
    <name type="scientific">Microplitis demolitor</name>
    <name type="common">Parasitoid wasp</name>
    <dbReference type="NCBI Taxonomy" id="69319"/>
</organismHost>
<accession>Q4ZJY8</accession>
<organism>
    <name type="scientific">Microplitis demolitor bracovirus (isolate Webb)</name>
    <name type="common">MdBV</name>
    <dbReference type="NCBI Taxonomy" id="654919"/>
    <lineage>
        <taxon>Viruses</taxon>
        <taxon>Viruses incertae sedis</taxon>
        <taxon>Polydnaviriformidae</taxon>
        <taxon>Bracoviriform</taxon>
        <taxon>Microplitis demolitor bracovirus</taxon>
    </lineage>
</organism>
<name>EG10_MDBVW</name>
<sequence>MYIDTGIMSNNIFLFAFFALVGLTRIEAMPTKGSEGTWDVDYEDQEHTGITCRENEHYNSTRIECEEECNDRNNKLCYRFQQFCWCNEGYIRNSSHICVKLEDCLKDEEQKSETLASSANNDSSKRLEDDLKLFSHDSVSHTSLEPETQAQKFNGIIDQETLDLVFGKPENSWAENKPLETKTQAQKFNGKIDQETLDLVFGKPKNSSAEKKPLETETQAQKFNGIIDQETLD</sequence>
<protein>
    <recommendedName>
        <fullName>Protease inhibitor Egf1.0</fullName>
    </recommendedName>
</protein>
<keyword id="KW-0945">Host-virus interaction</keyword>
<keyword id="KW-1090">Inhibition of host innate immune response by virus</keyword>
<keyword id="KW-1185">Reference proteome</keyword>
<keyword id="KW-0732">Signal</keyword>
<keyword id="KW-0899">Viral immunoevasion</keyword>
<dbReference type="EMBL" id="DQ000240">
    <property type="protein sequence ID" value="AAY24530.1"/>
    <property type="molecule type" value="Genomic_DNA"/>
</dbReference>
<dbReference type="KEGG" id="vg:3416073"/>
<dbReference type="Proteomes" id="UP000008168">
    <property type="component" value="Genome"/>
</dbReference>
<dbReference type="GO" id="GO:0052170">
    <property type="term" value="P:symbiont-mediated suppression of host innate immune response"/>
    <property type="evidence" value="ECO:0007669"/>
    <property type="project" value="UniProtKB-KW"/>
</dbReference>
<dbReference type="CDD" id="cd19941">
    <property type="entry name" value="TIL"/>
    <property type="match status" value="1"/>
</dbReference>
<dbReference type="Gene3D" id="2.10.25.10">
    <property type="entry name" value="Laminin"/>
    <property type="match status" value="1"/>
</dbReference>
<dbReference type="InterPro" id="IPR036084">
    <property type="entry name" value="Ser_inhib-like_sf"/>
</dbReference>
<dbReference type="InterPro" id="IPR002919">
    <property type="entry name" value="TIL_dom"/>
</dbReference>
<dbReference type="Pfam" id="PF01826">
    <property type="entry name" value="TIL"/>
    <property type="match status" value="1"/>
</dbReference>
<dbReference type="SUPFAM" id="SSF57567">
    <property type="entry name" value="Serine protease inhibitors"/>
    <property type="match status" value="1"/>
</dbReference>
<evidence type="ECO:0000255" key="1"/>
<evidence type="ECO:0000256" key="2">
    <source>
        <dbReference type="SAM" id="MobiDB-lite"/>
    </source>
</evidence>
<evidence type="ECO:0000269" key="3">
    <source>
    </source>
</evidence>
<evidence type="ECO:0000269" key="4">
    <source>
    </source>
</evidence>
<evidence type="ECO:0000305" key="5"/>
<comment type="function">
    <text evidence="3">Counteracts the host humoral immune response by inhibiting the processing and the amidolytic activity of host PAP3. Thereby, melanization of host hemolymph, normally producing several reactive intermediates toxic for viruses, is deregulated and proper immune response cannot occur.</text>
</comment>
<comment type="subunit">
    <text evidence="4">Interacts with host PAP1 and PAP3.</text>
</comment>
<comment type="similarity">
    <text evidence="5">Belongs to the polydnaviridae EGF-like motif protein family.</text>
</comment>
<reference key="1">
    <citation type="journal article" date="2006" name="Virology">
        <title>Polydnavirus genomes reflect their dual roles as mutualists and pathogens.</title>
        <authorList>
            <person name="Webb B.A."/>
            <person name="Strand M.R."/>
            <person name="Dickey S.E."/>
            <person name="Beck M.H."/>
            <person name="Hilgarth R.S."/>
            <person name="Barney W.E."/>
            <person name="Kadash K."/>
            <person name="Kroemer J.A."/>
            <person name="Lindstrom K.G."/>
            <person name="Rattanadechakul W."/>
            <person name="Shelby K.S."/>
            <person name="Thoetkiattikul H."/>
            <person name="Turnbull M.W."/>
            <person name="Witherell R.A."/>
        </authorList>
    </citation>
    <scope>NUCLEOTIDE SEQUENCE [GENOMIC DNA]</scope>
</reference>
<reference key="2">
    <citation type="journal article" date="2007" name="Proc. Natl. Acad. Sci. U.S.A.">
        <title>A novel polydnavirus protein inhibits the insect prophenoloxidase activation pathway.</title>
        <authorList>
            <person name="Beck M.H."/>
            <person name="Strand M.R."/>
        </authorList>
    </citation>
    <scope>FUNCTION</scope>
    <scope>MUTAGENESIS OF ARG-79</scope>
</reference>
<reference key="3">
    <citation type="journal article" date="2008" name="J. Biol. Chem.">
        <title>The viral protein Egf1.0 is a dual activity inhibitor of prophenoloxidase-activating proteinases 1 and 3 from Manduca sexta.</title>
        <authorList>
            <person name="Lu Z."/>
            <person name="Beck M.H."/>
            <person name="Wang Y."/>
            <person name="Jiang H."/>
            <person name="Strand M.R."/>
        </authorList>
    </citation>
    <scope>INTERACTION WITH HOST PAP1 AND PAP3</scope>
</reference>